<accession>Q7PSY2</accession>
<dbReference type="EMBL" id="AAAB01008811">
    <property type="protein sequence ID" value="EAA04861.3"/>
    <property type="molecule type" value="Genomic_DNA"/>
</dbReference>
<dbReference type="RefSeq" id="XP_309116.2">
    <property type="nucleotide sequence ID" value="XM_309116.3"/>
</dbReference>
<dbReference type="SMR" id="Q7PSY2"/>
<dbReference type="FunCoup" id="Q7PSY2">
    <property type="interactions" value="48"/>
</dbReference>
<dbReference type="PaxDb" id="7165-AGAP000931-PA"/>
<dbReference type="EnsemblMetazoa" id="AGAP000931-RA">
    <property type="protein sequence ID" value="AGAP000931-PA"/>
    <property type="gene ID" value="AGAP000931"/>
</dbReference>
<dbReference type="GeneID" id="1270417"/>
<dbReference type="KEGG" id="aga:1270417"/>
<dbReference type="VEuPathDB" id="VectorBase:AGAMI1_004529"/>
<dbReference type="VEuPathDB" id="VectorBase:AGAP000931"/>
<dbReference type="eggNOG" id="ENOG502SEY0">
    <property type="taxonomic scope" value="Eukaryota"/>
</dbReference>
<dbReference type="HOGENOM" id="CLU_167079_0_0_1"/>
<dbReference type="InParanoid" id="Q7PSY2"/>
<dbReference type="OMA" id="HKFIQPY"/>
<dbReference type="PhylomeDB" id="Q7PSY2"/>
<dbReference type="Proteomes" id="UP000007062">
    <property type="component" value="Chromosome X"/>
</dbReference>
<dbReference type="InterPro" id="IPR026776">
    <property type="entry name" value="UPF0729_C18orf32-like"/>
</dbReference>
<dbReference type="PANTHER" id="PTHR13456">
    <property type="entry name" value="UPF0729 PROTEIN C18ORF32"/>
    <property type="match status" value="1"/>
</dbReference>
<dbReference type="PANTHER" id="PTHR13456:SF0">
    <property type="entry name" value="UPF0729 PROTEIN C18ORF32"/>
    <property type="match status" value="1"/>
</dbReference>
<dbReference type="Pfam" id="PF14975">
    <property type="entry name" value="DUF4512"/>
    <property type="match status" value="1"/>
</dbReference>
<feature type="chain" id="PRO_0000365556" description="UPF0729 protein AGAP000931">
    <location>
        <begin position="1"/>
        <end position="96"/>
    </location>
</feature>
<feature type="region of interest" description="Disordered" evidence="1">
    <location>
        <begin position="65"/>
        <end position="96"/>
    </location>
</feature>
<feature type="compositionally biased region" description="Low complexity" evidence="1">
    <location>
        <begin position="75"/>
        <end position="96"/>
    </location>
</feature>
<protein>
    <recommendedName>
        <fullName>UPF0729 protein AGAP000931</fullName>
    </recommendedName>
</protein>
<reference key="1">
    <citation type="journal article" date="2002" name="Science">
        <title>The genome sequence of the malaria mosquito Anopheles gambiae.</title>
        <authorList>
            <person name="Holt R.A."/>
            <person name="Subramanian G.M."/>
            <person name="Halpern A."/>
            <person name="Sutton G.G."/>
            <person name="Charlab R."/>
            <person name="Nusskern D.R."/>
            <person name="Wincker P."/>
            <person name="Clark A.G."/>
            <person name="Ribeiro J.M.C."/>
            <person name="Wides R."/>
            <person name="Salzberg S.L."/>
            <person name="Loftus B.J."/>
            <person name="Yandell M.D."/>
            <person name="Majoros W.H."/>
            <person name="Rusch D.B."/>
            <person name="Lai Z."/>
            <person name="Kraft C.L."/>
            <person name="Abril J.F."/>
            <person name="Anthouard V."/>
            <person name="Arensburger P."/>
            <person name="Atkinson P.W."/>
            <person name="Baden H."/>
            <person name="de Berardinis V."/>
            <person name="Baldwin D."/>
            <person name="Benes V."/>
            <person name="Biedler J."/>
            <person name="Blass C."/>
            <person name="Bolanos R."/>
            <person name="Boscus D."/>
            <person name="Barnstead M."/>
            <person name="Cai S."/>
            <person name="Center A."/>
            <person name="Chaturverdi K."/>
            <person name="Christophides G.K."/>
            <person name="Chrystal M.A.M."/>
            <person name="Clamp M."/>
            <person name="Cravchik A."/>
            <person name="Curwen V."/>
            <person name="Dana A."/>
            <person name="Delcher A."/>
            <person name="Dew I."/>
            <person name="Evans C.A."/>
            <person name="Flanigan M."/>
            <person name="Grundschober-Freimoser A."/>
            <person name="Friedli L."/>
            <person name="Gu Z."/>
            <person name="Guan P."/>
            <person name="Guigo R."/>
            <person name="Hillenmeyer M.E."/>
            <person name="Hladun S.L."/>
            <person name="Hogan J.R."/>
            <person name="Hong Y.S."/>
            <person name="Hoover J."/>
            <person name="Jaillon O."/>
            <person name="Ke Z."/>
            <person name="Kodira C.D."/>
            <person name="Kokoza E."/>
            <person name="Koutsos A."/>
            <person name="Letunic I."/>
            <person name="Levitsky A.A."/>
            <person name="Liang Y."/>
            <person name="Lin J.-J."/>
            <person name="Lobo N.F."/>
            <person name="Lopez J.R."/>
            <person name="Malek J.A."/>
            <person name="McIntosh T.C."/>
            <person name="Meister S."/>
            <person name="Miller J.R."/>
            <person name="Mobarry C."/>
            <person name="Mongin E."/>
            <person name="Murphy S.D."/>
            <person name="O'Brochta D.A."/>
            <person name="Pfannkoch C."/>
            <person name="Qi R."/>
            <person name="Regier M.A."/>
            <person name="Remington K."/>
            <person name="Shao H."/>
            <person name="Sharakhova M.V."/>
            <person name="Sitter C.D."/>
            <person name="Shetty J."/>
            <person name="Smith T.J."/>
            <person name="Strong R."/>
            <person name="Sun J."/>
            <person name="Thomasova D."/>
            <person name="Ton L.Q."/>
            <person name="Topalis P."/>
            <person name="Tu Z.J."/>
            <person name="Unger M.F."/>
            <person name="Walenz B."/>
            <person name="Wang A.H."/>
            <person name="Wang J."/>
            <person name="Wang M."/>
            <person name="Wang X."/>
            <person name="Woodford K.J."/>
            <person name="Wortman J.R."/>
            <person name="Wu M."/>
            <person name="Yao A."/>
            <person name="Zdobnov E.M."/>
            <person name="Zhang H."/>
            <person name="Zhao Q."/>
            <person name="Zhao S."/>
            <person name="Zhu S.C."/>
            <person name="Zhimulev I."/>
            <person name="Coluzzi M."/>
            <person name="della Torre A."/>
            <person name="Roth C.W."/>
            <person name="Louis C."/>
            <person name="Kalush F."/>
            <person name="Mural R.J."/>
            <person name="Myers E.W."/>
            <person name="Adams M.D."/>
            <person name="Smith H.O."/>
            <person name="Broder S."/>
            <person name="Gardner M.J."/>
            <person name="Fraser C.M."/>
            <person name="Birney E."/>
            <person name="Bork P."/>
            <person name="Brey P.T."/>
            <person name="Venter J.C."/>
            <person name="Weissenbach J."/>
            <person name="Kafatos F.C."/>
            <person name="Collins F.H."/>
            <person name="Hoffman S.L."/>
        </authorList>
    </citation>
    <scope>NUCLEOTIDE SEQUENCE [LARGE SCALE GENOMIC DNA]</scope>
    <source>
        <strain>PEST</strain>
    </source>
</reference>
<keyword id="KW-1185">Reference proteome</keyword>
<organism>
    <name type="scientific">Anopheles gambiae</name>
    <name type="common">African malaria mosquito</name>
    <dbReference type="NCBI Taxonomy" id="7165"/>
    <lineage>
        <taxon>Eukaryota</taxon>
        <taxon>Metazoa</taxon>
        <taxon>Ecdysozoa</taxon>
        <taxon>Arthropoda</taxon>
        <taxon>Hexapoda</taxon>
        <taxon>Insecta</taxon>
        <taxon>Pterygota</taxon>
        <taxon>Neoptera</taxon>
        <taxon>Endopterygota</taxon>
        <taxon>Diptera</taxon>
        <taxon>Nematocera</taxon>
        <taxon>Culicoidea</taxon>
        <taxon>Culicidae</taxon>
        <taxon>Anophelinae</taxon>
        <taxon>Anopheles</taxon>
    </lineage>
</organism>
<comment type="similarity">
    <text evidence="2">Belongs to the UPF0729 family.</text>
</comment>
<evidence type="ECO:0000256" key="1">
    <source>
        <dbReference type="SAM" id="MobiDB-lite"/>
    </source>
</evidence>
<evidence type="ECO:0000305" key="2"/>
<gene>
    <name type="ORF">AGAP000931</name>
</gene>
<proteinExistence type="inferred from homology"/>
<sequence>MVCVPCFIVPVLLYLWHKFVQPILLKYWNPWEKKDADGNMIKTEPKNPFDCAGGVCRWAGKKTAVPPGHDPVGPTVAADTATSDAVDDAASSKKTL</sequence>
<name>U729_ANOGA</name>